<comment type="subcellular location">
    <subcellularLocation>
        <location evidence="2">Cytoplasm</location>
    </subcellularLocation>
    <subcellularLocation>
        <location evidence="2">Nucleus</location>
    </subcellularLocation>
</comment>
<comment type="similarity">
    <text evidence="3">Belongs to the carbon-nitrogen hydrolase superfamily.</text>
</comment>
<keyword id="KW-0963">Cytoplasm</keyword>
<keyword id="KW-0378">Hydrolase</keyword>
<keyword id="KW-0539">Nucleus</keyword>
<keyword id="KW-1185">Reference proteome</keyword>
<name>YCU9_SCHPO</name>
<sequence>MKANIACVQMAPKVCDVKHNLQKMSSYVHEVMESNPSTNLILFPELITSGYECGNTFTQIAEIAGEGPSFKTMSNLAAKYHVNIIYGFPEKEEKQSNIIYNSCIYITENGNLGGVYRKVHLFDTERKHFKKGSDFPIFETSFGKLGVMICWDTAFPEVARIHALNGADLLVVATNWENPYSDDWDLVTKARAFENCIPLVAANRVGTDEKLSFFGHSKIIGPTGKVIKALDEEKEGVISYTVDLDDAKPLRKNYYTFFEDRMPDLYKRLLSP</sequence>
<dbReference type="EC" id="3.5.-.-"/>
<dbReference type="EMBL" id="CU329672">
    <property type="protein sequence ID" value="CAA19069.1"/>
    <property type="molecule type" value="Genomic_DNA"/>
</dbReference>
<dbReference type="PIR" id="T41662">
    <property type="entry name" value="T41662"/>
</dbReference>
<dbReference type="RefSeq" id="NP_588519.1">
    <property type="nucleotide sequence ID" value="NM_001023508.2"/>
</dbReference>
<dbReference type="SMR" id="O59829"/>
<dbReference type="FunCoup" id="O59829">
    <property type="interactions" value="4"/>
</dbReference>
<dbReference type="STRING" id="284812.O59829"/>
<dbReference type="PaxDb" id="4896-SPCC965.09.1"/>
<dbReference type="EnsemblFungi" id="SPCC965.09.1">
    <property type="protein sequence ID" value="SPCC965.09.1:pep"/>
    <property type="gene ID" value="SPCC965.09"/>
</dbReference>
<dbReference type="KEGG" id="spo:2539328"/>
<dbReference type="PomBase" id="SPCC965.09"/>
<dbReference type="VEuPathDB" id="FungiDB:SPCC965.09"/>
<dbReference type="eggNOG" id="KOG0806">
    <property type="taxonomic scope" value="Eukaryota"/>
</dbReference>
<dbReference type="HOGENOM" id="CLU_030130_3_1_1"/>
<dbReference type="InParanoid" id="O59829"/>
<dbReference type="OMA" id="APYFCQV"/>
<dbReference type="PhylomeDB" id="O59829"/>
<dbReference type="Reactome" id="R-SPO-73621">
    <property type="pathway name" value="Pyrimidine catabolism"/>
</dbReference>
<dbReference type="PRO" id="PR:O59829"/>
<dbReference type="Proteomes" id="UP000002485">
    <property type="component" value="Chromosome III"/>
</dbReference>
<dbReference type="GO" id="GO:0005829">
    <property type="term" value="C:cytosol"/>
    <property type="evidence" value="ECO:0007005"/>
    <property type="project" value="PomBase"/>
</dbReference>
<dbReference type="GO" id="GO:0005634">
    <property type="term" value="C:nucleus"/>
    <property type="evidence" value="ECO:0007005"/>
    <property type="project" value="PomBase"/>
</dbReference>
<dbReference type="GO" id="GO:0016811">
    <property type="term" value="F:hydrolase activity, acting on carbon-nitrogen (but not peptide) bonds, in linear amides"/>
    <property type="evidence" value="ECO:0000318"/>
    <property type="project" value="GO_Central"/>
</dbReference>
<dbReference type="GO" id="GO:0050152">
    <property type="term" value="F:omega-amidase activity"/>
    <property type="evidence" value="ECO:0000250"/>
    <property type="project" value="PomBase"/>
</dbReference>
<dbReference type="GO" id="GO:1990748">
    <property type="term" value="P:cellular detoxification"/>
    <property type="evidence" value="ECO:0000266"/>
    <property type="project" value="PomBase"/>
</dbReference>
<dbReference type="GO" id="GO:0006107">
    <property type="term" value="P:oxaloacetate metabolic process"/>
    <property type="evidence" value="ECO:0000266"/>
    <property type="project" value="PomBase"/>
</dbReference>
<dbReference type="CDD" id="cd07197">
    <property type="entry name" value="nitrilase"/>
    <property type="match status" value="1"/>
</dbReference>
<dbReference type="FunFam" id="3.60.110.10:FF:000010">
    <property type="entry name" value="Carbon-nitrogen hydrolase"/>
    <property type="match status" value="1"/>
</dbReference>
<dbReference type="Gene3D" id="3.60.110.10">
    <property type="entry name" value="Carbon-nitrogen hydrolase"/>
    <property type="match status" value="1"/>
</dbReference>
<dbReference type="InterPro" id="IPR050345">
    <property type="entry name" value="Aliph_Amidase/BUP"/>
</dbReference>
<dbReference type="InterPro" id="IPR003010">
    <property type="entry name" value="C-N_Hydrolase"/>
</dbReference>
<dbReference type="InterPro" id="IPR036526">
    <property type="entry name" value="C-N_Hydrolase_sf"/>
</dbReference>
<dbReference type="PANTHER" id="PTHR43674">
    <property type="entry name" value="NITRILASE C965.09-RELATED"/>
    <property type="match status" value="1"/>
</dbReference>
<dbReference type="PANTHER" id="PTHR43674:SF12">
    <property type="entry name" value="NITRILASE C965.09-RELATED"/>
    <property type="match status" value="1"/>
</dbReference>
<dbReference type="Pfam" id="PF00795">
    <property type="entry name" value="CN_hydrolase"/>
    <property type="match status" value="1"/>
</dbReference>
<dbReference type="SUPFAM" id="SSF56317">
    <property type="entry name" value="Carbon-nitrogen hydrolase"/>
    <property type="match status" value="1"/>
</dbReference>
<dbReference type="PROSITE" id="PS50263">
    <property type="entry name" value="CN_HYDROLASE"/>
    <property type="match status" value="1"/>
</dbReference>
<accession>O59829</accession>
<evidence type="ECO:0000255" key="1">
    <source>
        <dbReference type="PROSITE-ProRule" id="PRU00054"/>
    </source>
</evidence>
<evidence type="ECO:0000269" key="2">
    <source>
    </source>
</evidence>
<evidence type="ECO:0000305" key="3"/>
<organism>
    <name type="scientific">Schizosaccharomyces pombe (strain 972 / ATCC 24843)</name>
    <name type="common">Fission yeast</name>
    <dbReference type="NCBI Taxonomy" id="284812"/>
    <lineage>
        <taxon>Eukaryota</taxon>
        <taxon>Fungi</taxon>
        <taxon>Dikarya</taxon>
        <taxon>Ascomycota</taxon>
        <taxon>Taphrinomycotina</taxon>
        <taxon>Schizosaccharomycetes</taxon>
        <taxon>Schizosaccharomycetales</taxon>
        <taxon>Schizosaccharomycetaceae</taxon>
        <taxon>Schizosaccharomyces</taxon>
    </lineage>
</organism>
<reference key="1">
    <citation type="journal article" date="2002" name="Nature">
        <title>The genome sequence of Schizosaccharomyces pombe.</title>
        <authorList>
            <person name="Wood V."/>
            <person name="Gwilliam R."/>
            <person name="Rajandream M.A."/>
            <person name="Lyne M.H."/>
            <person name="Lyne R."/>
            <person name="Stewart A."/>
            <person name="Sgouros J.G."/>
            <person name="Peat N."/>
            <person name="Hayles J."/>
            <person name="Baker S.G."/>
            <person name="Basham D."/>
            <person name="Bowman S."/>
            <person name="Brooks K."/>
            <person name="Brown D."/>
            <person name="Brown S."/>
            <person name="Chillingworth T."/>
            <person name="Churcher C.M."/>
            <person name="Collins M."/>
            <person name="Connor R."/>
            <person name="Cronin A."/>
            <person name="Davis P."/>
            <person name="Feltwell T."/>
            <person name="Fraser A."/>
            <person name="Gentles S."/>
            <person name="Goble A."/>
            <person name="Hamlin N."/>
            <person name="Harris D.E."/>
            <person name="Hidalgo J."/>
            <person name="Hodgson G."/>
            <person name="Holroyd S."/>
            <person name="Hornsby T."/>
            <person name="Howarth S."/>
            <person name="Huckle E.J."/>
            <person name="Hunt S."/>
            <person name="Jagels K."/>
            <person name="James K.D."/>
            <person name="Jones L."/>
            <person name="Jones M."/>
            <person name="Leather S."/>
            <person name="McDonald S."/>
            <person name="McLean J."/>
            <person name="Mooney P."/>
            <person name="Moule S."/>
            <person name="Mungall K.L."/>
            <person name="Murphy L.D."/>
            <person name="Niblett D."/>
            <person name="Odell C."/>
            <person name="Oliver K."/>
            <person name="O'Neil S."/>
            <person name="Pearson D."/>
            <person name="Quail M.A."/>
            <person name="Rabbinowitsch E."/>
            <person name="Rutherford K.M."/>
            <person name="Rutter S."/>
            <person name="Saunders D."/>
            <person name="Seeger K."/>
            <person name="Sharp S."/>
            <person name="Skelton J."/>
            <person name="Simmonds M.N."/>
            <person name="Squares R."/>
            <person name="Squares S."/>
            <person name="Stevens K."/>
            <person name="Taylor K."/>
            <person name="Taylor R.G."/>
            <person name="Tivey A."/>
            <person name="Walsh S.V."/>
            <person name="Warren T."/>
            <person name="Whitehead S."/>
            <person name="Woodward J.R."/>
            <person name="Volckaert G."/>
            <person name="Aert R."/>
            <person name="Robben J."/>
            <person name="Grymonprez B."/>
            <person name="Weltjens I."/>
            <person name="Vanstreels E."/>
            <person name="Rieger M."/>
            <person name="Schaefer M."/>
            <person name="Mueller-Auer S."/>
            <person name="Gabel C."/>
            <person name="Fuchs M."/>
            <person name="Duesterhoeft A."/>
            <person name="Fritzc C."/>
            <person name="Holzer E."/>
            <person name="Moestl D."/>
            <person name="Hilbert H."/>
            <person name="Borzym K."/>
            <person name="Langer I."/>
            <person name="Beck A."/>
            <person name="Lehrach H."/>
            <person name="Reinhardt R."/>
            <person name="Pohl T.M."/>
            <person name="Eger P."/>
            <person name="Zimmermann W."/>
            <person name="Wedler H."/>
            <person name="Wambutt R."/>
            <person name="Purnelle B."/>
            <person name="Goffeau A."/>
            <person name="Cadieu E."/>
            <person name="Dreano S."/>
            <person name="Gloux S."/>
            <person name="Lelaure V."/>
            <person name="Mottier S."/>
            <person name="Galibert F."/>
            <person name="Aves S.J."/>
            <person name="Xiang Z."/>
            <person name="Hunt C."/>
            <person name="Moore K."/>
            <person name="Hurst S.M."/>
            <person name="Lucas M."/>
            <person name="Rochet M."/>
            <person name="Gaillardin C."/>
            <person name="Tallada V.A."/>
            <person name="Garzon A."/>
            <person name="Thode G."/>
            <person name="Daga R.R."/>
            <person name="Cruzado L."/>
            <person name="Jimenez J."/>
            <person name="Sanchez M."/>
            <person name="del Rey F."/>
            <person name="Benito J."/>
            <person name="Dominguez A."/>
            <person name="Revuelta J.L."/>
            <person name="Moreno S."/>
            <person name="Armstrong J."/>
            <person name="Forsburg S.L."/>
            <person name="Cerutti L."/>
            <person name="Lowe T."/>
            <person name="McCombie W.R."/>
            <person name="Paulsen I."/>
            <person name="Potashkin J."/>
            <person name="Shpakovski G.V."/>
            <person name="Ussery D."/>
            <person name="Barrell B.G."/>
            <person name="Nurse P."/>
        </authorList>
    </citation>
    <scope>NUCLEOTIDE SEQUENCE [LARGE SCALE GENOMIC DNA]</scope>
    <source>
        <strain>972 / ATCC 24843</strain>
    </source>
</reference>
<reference key="2">
    <citation type="journal article" date="2006" name="Nat. Biotechnol.">
        <title>ORFeome cloning and global analysis of protein localization in the fission yeast Schizosaccharomyces pombe.</title>
        <authorList>
            <person name="Matsuyama A."/>
            <person name="Arai R."/>
            <person name="Yashiroda Y."/>
            <person name="Shirai A."/>
            <person name="Kamata A."/>
            <person name="Sekido S."/>
            <person name="Kobayashi Y."/>
            <person name="Hashimoto A."/>
            <person name="Hamamoto M."/>
            <person name="Hiraoka Y."/>
            <person name="Horinouchi S."/>
            <person name="Yoshida M."/>
        </authorList>
    </citation>
    <scope>SUBCELLULAR LOCATION [LARGE SCALE ANALYSIS]</scope>
</reference>
<protein>
    <recommendedName>
        <fullName>Probable nitrilase C965.09</fullName>
        <ecNumber>3.5.-.-</ecNumber>
    </recommendedName>
</protein>
<feature type="chain" id="PRO_0000315967" description="Probable nitrilase C965.09">
    <location>
        <begin position="1"/>
        <end position="272"/>
    </location>
</feature>
<feature type="domain" description="CN hydrolase" evidence="1">
    <location>
        <begin position="3"/>
        <end position="244"/>
    </location>
</feature>
<feature type="active site" description="Proton acceptor" evidence="1">
    <location>
        <position position="45"/>
    </location>
</feature>
<feature type="active site" description="Proton donor" evidence="1">
    <location>
        <position position="118"/>
    </location>
</feature>
<feature type="active site" description="Nucleophile" evidence="1">
    <location>
        <position position="150"/>
    </location>
</feature>
<proteinExistence type="inferred from homology"/>
<gene>
    <name type="ORF">SPCC965.09</name>
</gene>